<name>TRUA_THEON</name>
<feature type="chain" id="PRO_1000097797" description="tRNA pseudouridine synthase A">
    <location>
        <begin position="1"/>
        <end position="267"/>
    </location>
</feature>
<feature type="active site" description="Nucleophile" evidence="1">
    <location>
        <position position="55"/>
    </location>
</feature>
<feature type="binding site" evidence="1">
    <location>
        <position position="111"/>
    </location>
    <ligand>
        <name>substrate</name>
    </ligand>
</feature>
<sequence>MRLALRIAYDGTAFYGFQRQPGLRTVEGEIIRALTKLGIIEDVESSNFKGASRTDRGVSAFFNVVAFDVASRPDLVRPEVLNFHLKDVWVLGTAEVPEDFHPRFWAKSKTYRYYLIDAGFDEKAMRECAKLFIGTHDFSAFARLEPHKNPVRELIRADIIKRQGYYIIELEGKSFLWEMARRIVNALRFCGLGILTEEEVEKMLNGEYSRKIPPARPEGLVLWGIEYEGIEFRGNEKGIRKAKHDLFERYSEALTRAALFGDLLLGL</sequence>
<accession>B6YTJ2</accession>
<dbReference type="EC" id="5.4.99.12" evidence="1"/>
<dbReference type="EMBL" id="CP000855">
    <property type="protein sequence ID" value="ACJ15879.1"/>
    <property type="molecule type" value="Genomic_DNA"/>
</dbReference>
<dbReference type="RefSeq" id="WP_012571351.1">
    <property type="nucleotide sequence ID" value="NC_011529.1"/>
</dbReference>
<dbReference type="SMR" id="B6YTJ2"/>
<dbReference type="STRING" id="523850.TON_0394"/>
<dbReference type="GeneID" id="7016689"/>
<dbReference type="KEGG" id="ton:TON_0394"/>
<dbReference type="PATRIC" id="fig|523850.10.peg.397"/>
<dbReference type="eggNOG" id="arCOG04449">
    <property type="taxonomic scope" value="Archaea"/>
</dbReference>
<dbReference type="HOGENOM" id="CLU_014673_0_2_2"/>
<dbReference type="OrthoDB" id="25720at2157"/>
<dbReference type="Proteomes" id="UP000002727">
    <property type="component" value="Chromosome"/>
</dbReference>
<dbReference type="GO" id="GO:0003723">
    <property type="term" value="F:RNA binding"/>
    <property type="evidence" value="ECO:0007669"/>
    <property type="project" value="InterPro"/>
</dbReference>
<dbReference type="GO" id="GO:0160147">
    <property type="term" value="F:tRNA pseudouridine(38-40) synthase activity"/>
    <property type="evidence" value="ECO:0007669"/>
    <property type="project" value="UniProtKB-EC"/>
</dbReference>
<dbReference type="GO" id="GO:0031119">
    <property type="term" value="P:tRNA pseudouridine synthesis"/>
    <property type="evidence" value="ECO:0007669"/>
    <property type="project" value="UniProtKB-UniRule"/>
</dbReference>
<dbReference type="CDD" id="cd02866">
    <property type="entry name" value="PseudoU_synth_TruA_Archea"/>
    <property type="match status" value="1"/>
</dbReference>
<dbReference type="FunFam" id="3.30.70.580:FF:000001">
    <property type="entry name" value="tRNA pseudouridine synthase A"/>
    <property type="match status" value="1"/>
</dbReference>
<dbReference type="Gene3D" id="3.30.70.660">
    <property type="entry name" value="Pseudouridine synthase I, catalytic domain, C-terminal subdomain"/>
    <property type="match status" value="1"/>
</dbReference>
<dbReference type="Gene3D" id="3.30.70.580">
    <property type="entry name" value="Pseudouridine synthase I, catalytic domain, N-terminal subdomain"/>
    <property type="match status" value="1"/>
</dbReference>
<dbReference type="HAMAP" id="MF_00171">
    <property type="entry name" value="TruA"/>
    <property type="match status" value="1"/>
</dbReference>
<dbReference type="InterPro" id="IPR020103">
    <property type="entry name" value="PsdUridine_synth_cat_dom_sf"/>
</dbReference>
<dbReference type="InterPro" id="IPR001406">
    <property type="entry name" value="PsdUridine_synth_TruA"/>
</dbReference>
<dbReference type="InterPro" id="IPR020097">
    <property type="entry name" value="PsdUridine_synth_TruA_a/b_dom"/>
</dbReference>
<dbReference type="InterPro" id="IPR020095">
    <property type="entry name" value="PsdUridine_synth_TruA_C"/>
</dbReference>
<dbReference type="InterPro" id="IPR020094">
    <property type="entry name" value="TruA/RsuA/RluB/E/F_N"/>
</dbReference>
<dbReference type="NCBIfam" id="TIGR00071">
    <property type="entry name" value="hisT_truA"/>
    <property type="match status" value="1"/>
</dbReference>
<dbReference type="PANTHER" id="PTHR11142">
    <property type="entry name" value="PSEUDOURIDYLATE SYNTHASE"/>
    <property type="match status" value="1"/>
</dbReference>
<dbReference type="PANTHER" id="PTHR11142:SF0">
    <property type="entry name" value="TRNA PSEUDOURIDINE SYNTHASE-LIKE 1"/>
    <property type="match status" value="1"/>
</dbReference>
<dbReference type="Pfam" id="PF01416">
    <property type="entry name" value="PseudoU_synth_1"/>
    <property type="match status" value="1"/>
</dbReference>
<dbReference type="PIRSF" id="PIRSF001430">
    <property type="entry name" value="tRNA_psdUrid_synth"/>
    <property type="match status" value="1"/>
</dbReference>
<dbReference type="SUPFAM" id="SSF55120">
    <property type="entry name" value="Pseudouridine synthase"/>
    <property type="match status" value="1"/>
</dbReference>
<gene>
    <name evidence="1" type="primary">truA</name>
    <name type="ordered locus">TON_0394</name>
</gene>
<evidence type="ECO:0000255" key="1">
    <source>
        <dbReference type="HAMAP-Rule" id="MF_00171"/>
    </source>
</evidence>
<reference key="1">
    <citation type="journal article" date="2008" name="J. Bacteriol.">
        <title>The complete genome sequence of Thermococcus onnurineus NA1 reveals a mixed heterotrophic and carboxydotrophic metabolism.</title>
        <authorList>
            <person name="Lee H.S."/>
            <person name="Kang S.G."/>
            <person name="Bae S.S."/>
            <person name="Lim J.K."/>
            <person name="Cho Y."/>
            <person name="Kim Y.J."/>
            <person name="Jeon J.H."/>
            <person name="Cha S.-S."/>
            <person name="Kwon K.K."/>
            <person name="Kim H.-T."/>
            <person name="Park C.-J."/>
            <person name="Lee H.-W."/>
            <person name="Kim S.I."/>
            <person name="Chun J."/>
            <person name="Colwell R.R."/>
            <person name="Kim S.-J."/>
            <person name="Lee J.-H."/>
        </authorList>
    </citation>
    <scope>NUCLEOTIDE SEQUENCE [LARGE SCALE GENOMIC DNA]</scope>
    <source>
        <strain>NA1</strain>
    </source>
</reference>
<comment type="function">
    <text evidence="1">Formation of pseudouridine at positions 38, 39 and 40 in the anticodon stem and loop of transfer RNAs.</text>
</comment>
<comment type="catalytic activity">
    <reaction evidence="1">
        <text>uridine(38/39/40) in tRNA = pseudouridine(38/39/40) in tRNA</text>
        <dbReference type="Rhea" id="RHEA:22376"/>
        <dbReference type="Rhea" id="RHEA-COMP:10085"/>
        <dbReference type="Rhea" id="RHEA-COMP:10087"/>
        <dbReference type="ChEBI" id="CHEBI:65314"/>
        <dbReference type="ChEBI" id="CHEBI:65315"/>
        <dbReference type="EC" id="5.4.99.12"/>
    </reaction>
</comment>
<comment type="similarity">
    <text evidence="1">Belongs to the tRNA pseudouridine synthase TruA family.</text>
</comment>
<keyword id="KW-0413">Isomerase</keyword>
<keyword id="KW-0819">tRNA processing</keyword>
<proteinExistence type="inferred from homology"/>
<organism>
    <name type="scientific">Thermococcus onnurineus (strain NA1)</name>
    <dbReference type="NCBI Taxonomy" id="523850"/>
    <lineage>
        <taxon>Archaea</taxon>
        <taxon>Methanobacteriati</taxon>
        <taxon>Methanobacteriota</taxon>
        <taxon>Thermococci</taxon>
        <taxon>Thermococcales</taxon>
        <taxon>Thermococcaceae</taxon>
        <taxon>Thermococcus</taxon>
    </lineage>
</organism>
<protein>
    <recommendedName>
        <fullName evidence="1">tRNA pseudouridine synthase A</fullName>
        <ecNumber evidence="1">5.4.99.12</ecNumber>
    </recommendedName>
    <alternativeName>
        <fullName evidence="1">tRNA pseudouridine(38-40) synthase</fullName>
    </alternativeName>
    <alternativeName>
        <fullName evidence="1">tRNA pseudouridylate synthase I</fullName>
    </alternativeName>
    <alternativeName>
        <fullName evidence="1">tRNA-uridine isomerase I</fullName>
    </alternativeName>
</protein>